<feature type="chain" id="PRO_0000362228" description="ATP synthase subunit a">
    <location>
        <begin position="1"/>
        <end position="259"/>
    </location>
</feature>
<feature type="transmembrane region" description="Helical" evidence="1">
    <location>
        <begin position="29"/>
        <end position="49"/>
    </location>
</feature>
<feature type="transmembrane region" description="Helical" evidence="1">
    <location>
        <begin position="90"/>
        <end position="110"/>
    </location>
</feature>
<feature type="transmembrane region" description="Helical" evidence="1">
    <location>
        <begin position="134"/>
        <end position="154"/>
    </location>
</feature>
<feature type="transmembrane region" description="Helical" evidence="1">
    <location>
        <begin position="208"/>
        <end position="228"/>
    </location>
</feature>
<feature type="transmembrane region" description="Helical" evidence="1">
    <location>
        <begin position="230"/>
        <end position="250"/>
    </location>
</feature>
<keyword id="KW-0066">ATP synthesis</keyword>
<keyword id="KW-0997">Cell inner membrane</keyword>
<keyword id="KW-1003">Cell membrane</keyword>
<keyword id="KW-0138">CF(0)</keyword>
<keyword id="KW-0375">Hydrogen ion transport</keyword>
<keyword id="KW-0406">Ion transport</keyword>
<keyword id="KW-0472">Membrane</keyword>
<keyword id="KW-0812">Transmembrane</keyword>
<keyword id="KW-1133">Transmembrane helix</keyword>
<keyword id="KW-0813">Transport</keyword>
<organism>
    <name type="scientific">Aeromonas salmonicida (strain A449)</name>
    <dbReference type="NCBI Taxonomy" id="382245"/>
    <lineage>
        <taxon>Bacteria</taxon>
        <taxon>Pseudomonadati</taxon>
        <taxon>Pseudomonadota</taxon>
        <taxon>Gammaproteobacteria</taxon>
        <taxon>Aeromonadales</taxon>
        <taxon>Aeromonadaceae</taxon>
        <taxon>Aeromonas</taxon>
    </lineage>
</organism>
<gene>
    <name evidence="1" type="primary">atpB</name>
    <name type="ordered locus">ASA_4356</name>
</gene>
<comment type="function">
    <text evidence="1">Key component of the proton channel; it plays a direct role in the translocation of protons across the membrane.</text>
</comment>
<comment type="subunit">
    <text evidence="1">F-type ATPases have 2 components, CF(1) - the catalytic core - and CF(0) - the membrane proton channel. CF(1) has five subunits: alpha(3), beta(3), gamma(1), delta(1), epsilon(1). CF(0) has three main subunits: a(1), b(2) and c(9-12). The alpha and beta chains form an alternating ring which encloses part of the gamma chain. CF(1) is attached to CF(0) by a central stalk formed by the gamma and epsilon chains, while a peripheral stalk is formed by the delta and b chains.</text>
</comment>
<comment type="subcellular location">
    <subcellularLocation>
        <location evidence="1">Cell inner membrane</location>
        <topology evidence="1">Multi-pass membrane protein</topology>
    </subcellularLocation>
</comment>
<comment type="similarity">
    <text evidence="1">Belongs to the ATPase A chain family.</text>
</comment>
<evidence type="ECO:0000255" key="1">
    <source>
        <dbReference type="HAMAP-Rule" id="MF_01393"/>
    </source>
</evidence>
<protein>
    <recommendedName>
        <fullName evidence="1">ATP synthase subunit a</fullName>
    </recommendedName>
    <alternativeName>
        <fullName evidence="1">ATP synthase F0 sector subunit a</fullName>
    </alternativeName>
    <alternativeName>
        <fullName evidence="1">F-ATPase subunit 6</fullName>
    </alternativeName>
</protein>
<dbReference type="EMBL" id="CP000644">
    <property type="protein sequence ID" value="ABO92271.1"/>
    <property type="molecule type" value="Genomic_DNA"/>
</dbReference>
<dbReference type="RefSeq" id="WP_005319615.1">
    <property type="nucleotide sequence ID" value="NC_009348.1"/>
</dbReference>
<dbReference type="SMR" id="A4STP9"/>
<dbReference type="STRING" id="29491.GCA_000820065_00585"/>
<dbReference type="GeneID" id="79882027"/>
<dbReference type="KEGG" id="asa:ASA_4356"/>
<dbReference type="eggNOG" id="COG0356">
    <property type="taxonomic scope" value="Bacteria"/>
</dbReference>
<dbReference type="HOGENOM" id="CLU_041018_1_0_6"/>
<dbReference type="Proteomes" id="UP000000225">
    <property type="component" value="Chromosome"/>
</dbReference>
<dbReference type="GO" id="GO:0005886">
    <property type="term" value="C:plasma membrane"/>
    <property type="evidence" value="ECO:0007669"/>
    <property type="project" value="UniProtKB-SubCell"/>
</dbReference>
<dbReference type="GO" id="GO:0045259">
    <property type="term" value="C:proton-transporting ATP synthase complex"/>
    <property type="evidence" value="ECO:0007669"/>
    <property type="project" value="UniProtKB-KW"/>
</dbReference>
<dbReference type="GO" id="GO:0046933">
    <property type="term" value="F:proton-transporting ATP synthase activity, rotational mechanism"/>
    <property type="evidence" value="ECO:0007669"/>
    <property type="project" value="UniProtKB-UniRule"/>
</dbReference>
<dbReference type="GO" id="GO:0042777">
    <property type="term" value="P:proton motive force-driven plasma membrane ATP synthesis"/>
    <property type="evidence" value="ECO:0007669"/>
    <property type="project" value="TreeGrafter"/>
</dbReference>
<dbReference type="CDD" id="cd00310">
    <property type="entry name" value="ATP-synt_Fo_a_6"/>
    <property type="match status" value="1"/>
</dbReference>
<dbReference type="FunFam" id="1.20.120.220:FF:000002">
    <property type="entry name" value="ATP synthase subunit a"/>
    <property type="match status" value="1"/>
</dbReference>
<dbReference type="Gene3D" id="1.20.120.220">
    <property type="entry name" value="ATP synthase, F0 complex, subunit A"/>
    <property type="match status" value="1"/>
</dbReference>
<dbReference type="HAMAP" id="MF_01393">
    <property type="entry name" value="ATP_synth_a_bact"/>
    <property type="match status" value="1"/>
</dbReference>
<dbReference type="InterPro" id="IPR045082">
    <property type="entry name" value="ATP_syn_F0_a_bact/chloroplast"/>
</dbReference>
<dbReference type="InterPro" id="IPR000568">
    <property type="entry name" value="ATP_synth_F0_asu"/>
</dbReference>
<dbReference type="InterPro" id="IPR023011">
    <property type="entry name" value="ATP_synth_F0_asu_AS"/>
</dbReference>
<dbReference type="InterPro" id="IPR035908">
    <property type="entry name" value="F0_ATP_A_sf"/>
</dbReference>
<dbReference type="NCBIfam" id="TIGR01131">
    <property type="entry name" value="ATP_synt_6_or_A"/>
    <property type="match status" value="1"/>
</dbReference>
<dbReference type="NCBIfam" id="NF004477">
    <property type="entry name" value="PRK05815.1-1"/>
    <property type="match status" value="1"/>
</dbReference>
<dbReference type="PANTHER" id="PTHR42823">
    <property type="entry name" value="ATP SYNTHASE SUBUNIT A, CHLOROPLASTIC"/>
    <property type="match status" value="1"/>
</dbReference>
<dbReference type="PANTHER" id="PTHR42823:SF3">
    <property type="entry name" value="ATP SYNTHASE SUBUNIT A, CHLOROPLASTIC"/>
    <property type="match status" value="1"/>
</dbReference>
<dbReference type="Pfam" id="PF00119">
    <property type="entry name" value="ATP-synt_A"/>
    <property type="match status" value="1"/>
</dbReference>
<dbReference type="PRINTS" id="PR00123">
    <property type="entry name" value="ATPASEA"/>
</dbReference>
<dbReference type="SUPFAM" id="SSF81336">
    <property type="entry name" value="F1F0 ATP synthase subunit A"/>
    <property type="match status" value="1"/>
</dbReference>
<dbReference type="PROSITE" id="PS00449">
    <property type="entry name" value="ATPASE_A"/>
    <property type="match status" value="1"/>
</dbReference>
<sequence>MAATGEALTTQGYISHHLHHLQVGSGFWTVNIDSMIFSVILGALFIWIFRKVAATATSGVPGKLQCFVEMVVEFVDDTVKGIFHGKSKLIAPLALTVFIWVFLMNLMDLIPVDYLPYTAQVLGIPYLRVVPSADVNITMSMALGVFALIIIYSIKMKGVSGFVKELTLNPFNHWALIPVNLALELVTLLSKPISLGLRLFGNMYAGELVFILIAGLLPWWSQWLLSVPWALFHILVITLQAFIFMVLTIVYLSMASEDH</sequence>
<proteinExistence type="inferred from homology"/>
<reference key="1">
    <citation type="journal article" date="2008" name="BMC Genomics">
        <title>The genome of Aeromonas salmonicida subsp. salmonicida A449: insights into the evolution of a fish pathogen.</title>
        <authorList>
            <person name="Reith M.E."/>
            <person name="Singh R.K."/>
            <person name="Curtis B."/>
            <person name="Boyd J.M."/>
            <person name="Bouevitch A."/>
            <person name="Kimball J."/>
            <person name="Munholland J."/>
            <person name="Murphy C."/>
            <person name="Sarty D."/>
            <person name="Williams J."/>
            <person name="Nash J.H."/>
            <person name="Johnson S.C."/>
            <person name="Brown L.L."/>
        </authorList>
    </citation>
    <scope>NUCLEOTIDE SEQUENCE [LARGE SCALE GENOMIC DNA]</scope>
    <source>
        <strain>A449</strain>
    </source>
</reference>
<accession>A4STP9</accession>
<name>ATP6_AERS4</name>